<gene>
    <name evidence="1" type="primary">caiE</name>
    <name type="ordered locus">ECIAI1_0037</name>
</gene>
<sequence length="196" mass="21156">MSYYAFEGLIPVVHPTAFVHPSAVLIGDVIVGAGVYIGPLASLRGDYGRLIVQAGANIQDGCIMHGYCDTDTIVGENGHIGHGAILHGCVIGRDALVGMNSVIMDGAVIGEESIVAAMSFVKAGFHGEKRQLLMGTPARAVRSVSDDELHWKRLNTKEYQDLVGRCHASLHETQPLRQMEENRPRLQGTTDVTPKR</sequence>
<proteinExistence type="inferred from homology"/>
<feature type="chain" id="PRO_1000200928" description="Carnitine operon protein CaiE">
    <location>
        <begin position="1"/>
        <end position="196"/>
    </location>
</feature>
<feature type="region of interest" description="Disordered" evidence="2">
    <location>
        <begin position="173"/>
        <end position="196"/>
    </location>
</feature>
<feature type="compositionally biased region" description="Polar residues" evidence="2">
    <location>
        <begin position="187"/>
        <end position="196"/>
    </location>
</feature>
<comment type="function">
    <text evidence="1">Overproduction of CaiE stimulates the activity of CaiB and CaiD.</text>
</comment>
<comment type="pathway">
    <text evidence="1">Amine and polyamine metabolism; carnitine metabolism.</text>
</comment>
<comment type="similarity">
    <text evidence="1">Belongs to the transferase hexapeptide repeat family.</text>
</comment>
<name>CAIE_ECO8A</name>
<organism>
    <name type="scientific">Escherichia coli O8 (strain IAI1)</name>
    <dbReference type="NCBI Taxonomy" id="585034"/>
    <lineage>
        <taxon>Bacteria</taxon>
        <taxon>Pseudomonadati</taxon>
        <taxon>Pseudomonadota</taxon>
        <taxon>Gammaproteobacteria</taxon>
        <taxon>Enterobacterales</taxon>
        <taxon>Enterobacteriaceae</taxon>
        <taxon>Escherichia</taxon>
    </lineage>
</organism>
<accession>B7M0D2</accession>
<reference key="1">
    <citation type="journal article" date="2009" name="PLoS Genet.">
        <title>Organised genome dynamics in the Escherichia coli species results in highly diverse adaptive paths.</title>
        <authorList>
            <person name="Touchon M."/>
            <person name="Hoede C."/>
            <person name="Tenaillon O."/>
            <person name="Barbe V."/>
            <person name="Baeriswyl S."/>
            <person name="Bidet P."/>
            <person name="Bingen E."/>
            <person name="Bonacorsi S."/>
            <person name="Bouchier C."/>
            <person name="Bouvet O."/>
            <person name="Calteau A."/>
            <person name="Chiapello H."/>
            <person name="Clermont O."/>
            <person name="Cruveiller S."/>
            <person name="Danchin A."/>
            <person name="Diard M."/>
            <person name="Dossat C."/>
            <person name="Karoui M.E."/>
            <person name="Frapy E."/>
            <person name="Garry L."/>
            <person name="Ghigo J.M."/>
            <person name="Gilles A.M."/>
            <person name="Johnson J."/>
            <person name="Le Bouguenec C."/>
            <person name="Lescat M."/>
            <person name="Mangenot S."/>
            <person name="Martinez-Jehanne V."/>
            <person name="Matic I."/>
            <person name="Nassif X."/>
            <person name="Oztas S."/>
            <person name="Petit M.A."/>
            <person name="Pichon C."/>
            <person name="Rouy Z."/>
            <person name="Ruf C.S."/>
            <person name="Schneider D."/>
            <person name="Tourret J."/>
            <person name="Vacherie B."/>
            <person name="Vallenet D."/>
            <person name="Medigue C."/>
            <person name="Rocha E.P.C."/>
            <person name="Denamur E."/>
        </authorList>
    </citation>
    <scope>NUCLEOTIDE SEQUENCE [LARGE SCALE GENOMIC DNA]</scope>
    <source>
        <strain>IAI1</strain>
    </source>
</reference>
<keyword id="KW-0677">Repeat</keyword>
<keyword id="KW-0808">Transferase</keyword>
<dbReference type="EMBL" id="CU928160">
    <property type="protein sequence ID" value="CAQ96927.1"/>
    <property type="molecule type" value="Genomic_DNA"/>
</dbReference>
<dbReference type="RefSeq" id="WP_000122876.1">
    <property type="nucleotide sequence ID" value="NC_011741.1"/>
</dbReference>
<dbReference type="SMR" id="B7M0D2"/>
<dbReference type="GeneID" id="93777400"/>
<dbReference type="KEGG" id="ecr:ECIAI1_0037"/>
<dbReference type="HOGENOM" id="CLU_064827_4_2_6"/>
<dbReference type="UniPathway" id="UPA00117"/>
<dbReference type="GO" id="GO:0016740">
    <property type="term" value="F:transferase activity"/>
    <property type="evidence" value="ECO:0007669"/>
    <property type="project" value="UniProtKB-KW"/>
</dbReference>
<dbReference type="GO" id="GO:0009437">
    <property type="term" value="P:carnitine metabolic process"/>
    <property type="evidence" value="ECO:0007669"/>
    <property type="project" value="UniProtKB-UniRule"/>
</dbReference>
<dbReference type="CDD" id="cd04745">
    <property type="entry name" value="LbH_paaY_like"/>
    <property type="match status" value="1"/>
</dbReference>
<dbReference type="FunFam" id="2.160.10.10:FF:000012">
    <property type="entry name" value="Carnitine operon protein CaiE"/>
    <property type="match status" value="1"/>
</dbReference>
<dbReference type="Gene3D" id="2.160.10.10">
    <property type="entry name" value="Hexapeptide repeat proteins"/>
    <property type="match status" value="1"/>
</dbReference>
<dbReference type="HAMAP" id="MF_01525">
    <property type="entry name" value="CaiE"/>
    <property type="match status" value="1"/>
</dbReference>
<dbReference type="InterPro" id="IPR023446">
    <property type="entry name" value="CaiE"/>
</dbReference>
<dbReference type="InterPro" id="IPR001451">
    <property type="entry name" value="Hexapep"/>
</dbReference>
<dbReference type="InterPro" id="IPR050484">
    <property type="entry name" value="Transf_Hexapept/Carb_Anhydrase"/>
</dbReference>
<dbReference type="InterPro" id="IPR011004">
    <property type="entry name" value="Trimer_LpxA-like_sf"/>
</dbReference>
<dbReference type="NCBIfam" id="NF010150">
    <property type="entry name" value="PRK13627.1"/>
    <property type="match status" value="1"/>
</dbReference>
<dbReference type="PANTHER" id="PTHR13061">
    <property type="entry name" value="DYNACTIN SUBUNIT P25"/>
    <property type="match status" value="1"/>
</dbReference>
<dbReference type="PANTHER" id="PTHR13061:SF29">
    <property type="entry name" value="GAMMA CARBONIC ANHYDRASE-LIKE 1, MITOCHONDRIAL-RELATED"/>
    <property type="match status" value="1"/>
</dbReference>
<dbReference type="Pfam" id="PF00132">
    <property type="entry name" value="Hexapep"/>
    <property type="match status" value="1"/>
</dbReference>
<dbReference type="SUPFAM" id="SSF51161">
    <property type="entry name" value="Trimeric LpxA-like enzymes"/>
    <property type="match status" value="1"/>
</dbReference>
<protein>
    <recommendedName>
        <fullName evidence="1">Carnitine operon protein CaiE</fullName>
    </recommendedName>
</protein>
<evidence type="ECO:0000255" key="1">
    <source>
        <dbReference type="HAMAP-Rule" id="MF_01525"/>
    </source>
</evidence>
<evidence type="ECO:0000256" key="2">
    <source>
        <dbReference type="SAM" id="MobiDB-lite"/>
    </source>
</evidence>